<proteinExistence type="uncertain"/>
<dbReference type="EMBL" id="AAFI02000034">
    <property type="protein sequence ID" value="EAL67498.1"/>
    <property type="status" value="ALT_SEQ"/>
    <property type="molecule type" value="Genomic_DNA"/>
</dbReference>
<dbReference type="EMBL" id="AAFI02000034">
    <property type="protein sequence ID" value="EAL67499.1"/>
    <property type="molecule type" value="Genomic_DNA"/>
</dbReference>
<dbReference type="RefSeq" id="XP_641472.1">
    <property type="nucleotide sequence ID" value="XM_636380.1"/>
</dbReference>
<dbReference type="RefSeq" id="XP_641473.1">
    <property type="nucleotide sequence ID" value="XM_636381.1"/>
</dbReference>
<dbReference type="GlyGen" id="Q54W62">
    <property type="glycosylation" value="1 site"/>
</dbReference>
<dbReference type="PaxDb" id="44689-DDB0206342"/>
<dbReference type="EnsemblProtists" id="EAL67498">
    <property type="protein sequence ID" value="EAL67498"/>
    <property type="gene ID" value="DDB_G0279883"/>
</dbReference>
<dbReference type="EnsemblProtists" id="EAL67499">
    <property type="protein sequence ID" value="EAL67499"/>
    <property type="gene ID" value="DDB_G0279885"/>
</dbReference>
<dbReference type="GeneID" id="8622271"/>
<dbReference type="KEGG" id="ddi:DDB_G0279883"/>
<dbReference type="KEGG" id="ddi:DDB_G0279885"/>
<dbReference type="VEuPathDB" id="AmoebaDB:DDB_G0279885"/>
<dbReference type="HOGENOM" id="CLU_2563212_0_0_1"/>
<dbReference type="InParanoid" id="Q54W62"/>
<dbReference type="Proteomes" id="UP000002195">
    <property type="component" value="Chromosome 3"/>
</dbReference>
<feature type="chain" id="PRO_0000352461" description="Putative uncharacterized protein DDB_G0279885">
    <location>
        <begin position="1"/>
        <end position="82"/>
    </location>
</feature>
<feature type="region of interest" description="Disordered" evidence="1">
    <location>
        <begin position="55"/>
        <end position="82"/>
    </location>
</feature>
<feature type="compositionally biased region" description="Polar residues" evidence="1">
    <location>
        <begin position="55"/>
        <end position="64"/>
    </location>
</feature>
<accession>Q54W62</accession>
<accession>Q54W63</accession>
<organism>
    <name type="scientific">Dictyostelium discoideum</name>
    <name type="common">Social amoeba</name>
    <dbReference type="NCBI Taxonomy" id="44689"/>
    <lineage>
        <taxon>Eukaryota</taxon>
        <taxon>Amoebozoa</taxon>
        <taxon>Evosea</taxon>
        <taxon>Eumycetozoa</taxon>
        <taxon>Dictyostelia</taxon>
        <taxon>Dictyosteliales</taxon>
        <taxon>Dictyosteliaceae</taxon>
        <taxon>Dictyostelium</taxon>
    </lineage>
</organism>
<protein>
    <recommendedName>
        <fullName>Putative uncharacterized protein DDB_G0279885</fullName>
    </recommendedName>
</protein>
<keyword id="KW-1185">Reference proteome</keyword>
<sequence>MMVSIIVPSLVKESSRESLLATTIDNSTLSTTPSPKLPTLEISGGSAKEIWTKIDQNTAPSTPSKILPKRLPSQSNLNNNNN</sequence>
<comment type="caution">
    <text evidence="2">Could be the product of a pseudogene.</text>
</comment>
<comment type="sequence caution" evidence="2">
    <conflict type="erroneous gene model prediction">
        <sequence resource="EMBL-CDS" id="EAL67498"/>
    </conflict>
</comment>
<name>Y6341_DICDI</name>
<evidence type="ECO:0000256" key="1">
    <source>
        <dbReference type="SAM" id="MobiDB-lite"/>
    </source>
</evidence>
<evidence type="ECO:0000305" key="2"/>
<reference key="1">
    <citation type="journal article" date="2005" name="Nature">
        <title>The genome of the social amoeba Dictyostelium discoideum.</title>
        <authorList>
            <person name="Eichinger L."/>
            <person name="Pachebat J.A."/>
            <person name="Gloeckner G."/>
            <person name="Rajandream M.A."/>
            <person name="Sucgang R."/>
            <person name="Berriman M."/>
            <person name="Song J."/>
            <person name="Olsen R."/>
            <person name="Szafranski K."/>
            <person name="Xu Q."/>
            <person name="Tunggal B."/>
            <person name="Kummerfeld S."/>
            <person name="Madera M."/>
            <person name="Konfortov B.A."/>
            <person name="Rivero F."/>
            <person name="Bankier A.T."/>
            <person name="Lehmann R."/>
            <person name="Hamlin N."/>
            <person name="Davies R."/>
            <person name="Gaudet P."/>
            <person name="Fey P."/>
            <person name="Pilcher K."/>
            <person name="Chen G."/>
            <person name="Saunders D."/>
            <person name="Sodergren E.J."/>
            <person name="Davis P."/>
            <person name="Kerhornou A."/>
            <person name="Nie X."/>
            <person name="Hall N."/>
            <person name="Anjard C."/>
            <person name="Hemphill L."/>
            <person name="Bason N."/>
            <person name="Farbrother P."/>
            <person name="Desany B."/>
            <person name="Just E."/>
            <person name="Morio T."/>
            <person name="Rost R."/>
            <person name="Churcher C.M."/>
            <person name="Cooper J."/>
            <person name="Haydock S."/>
            <person name="van Driessche N."/>
            <person name="Cronin A."/>
            <person name="Goodhead I."/>
            <person name="Muzny D.M."/>
            <person name="Mourier T."/>
            <person name="Pain A."/>
            <person name="Lu M."/>
            <person name="Harper D."/>
            <person name="Lindsay R."/>
            <person name="Hauser H."/>
            <person name="James K.D."/>
            <person name="Quiles M."/>
            <person name="Madan Babu M."/>
            <person name="Saito T."/>
            <person name="Buchrieser C."/>
            <person name="Wardroper A."/>
            <person name="Felder M."/>
            <person name="Thangavelu M."/>
            <person name="Johnson D."/>
            <person name="Knights A."/>
            <person name="Loulseged H."/>
            <person name="Mungall K.L."/>
            <person name="Oliver K."/>
            <person name="Price C."/>
            <person name="Quail M.A."/>
            <person name="Urushihara H."/>
            <person name="Hernandez J."/>
            <person name="Rabbinowitsch E."/>
            <person name="Steffen D."/>
            <person name="Sanders M."/>
            <person name="Ma J."/>
            <person name="Kohara Y."/>
            <person name="Sharp S."/>
            <person name="Simmonds M.N."/>
            <person name="Spiegler S."/>
            <person name="Tivey A."/>
            <person name="Sugano S."/>
            <person name="White B."/>
            <person name="Walker D."/>
            <person name="Woodward J.R."/>
            <person name="Winckler T."/>
            <person name="Tanaka Y."/>
            <person name="Shaulsky G."/>
            <person name="Schleicher M."/>
            <person name="Weinstock G.M."/>
            <person name="Rosenthal A."/>
            <person name="Cox E.C."/>
            <person name="Chisholm R.L."/>
            <person name="Gibbs R.A."/>
            <person name="Loomis W.F."/>
            <person name="Platzer M."/>
            <person name="Kay R.R."/>
            <person name="Williams J.G."/>
            <person name="Dear P.H."/>
            <person name="Noegel A.A."/>
            <person name="Barrell B.G."/>
            <person name="Kuspa A."/>
        </authorList>
    </citation>
    <scope>NUCLEOTIDE SEQUENCE [LARGE SCALE GENOMIC DNA]</scope>
    <source>
        <strain>AX4</strain>
    </source>
</reference>
<gene>
    <name type="ORF">DDB_G0279885</name>
</gene>